<name>RBG1L_PONAB</name>
<reference evidence="7" key="1">
    <citation type="submission" date="2004-11" db="EMBL/GenBank/DDBJ databases">
        <authorList>
            <consortium name="The German cDNA consortium"/>
        </authorList>
    </citation>
    <scope>NUCLEOTIDE SEQUENCE [LARGE SCALE MRNA]</scope>
    <source>
        <tissue evidence="7">Heart</tissue>
    </source>
</reference>
<organism>
    <name type="scientific">Pongo abelii</name>
    <name type="common">Sumatran orangutan</name>
    <name type="synonym">Pongo pygmaeus abelii</name>
    <dbReference type="NCBI Taxonomy" id="9601"/>
    <lineage>
        <taxon>Eukaryota</taxon>
        <taxon>Metazoa</taxon>
        <taxon>Chordata</taxon>
        <taxon>Craniata</taxon>
        <taxon>Vertebrata</taxon>
        <taxon>Euteleostomi</taxon>
        <taxon>Mammalia</taxon>
        <taxon>Eutheria</taxon>
        <taxon>Euarchontoglires</taxon>
        <taxon>Primates</taxon>
        <taxon>Haplorrhini</taxon>
        <taxon>Catarrhini</taxon>
        <taxon>Hominidae</taxon>
        <taxon>Pongo</taxon>
    </lineage>
</organism>
<sequence>MEVRASLQKVSGSSDSVATMNSEEFVLVPQYADDNSTKHEEKPQLKIVSNGDEQLEKAMEEILRDSEKRQSSLLVDCQSSSEISDHSFGDIPASQTNKPSLQLILDPSNTEISTPRPSSPGGLPEEDSVLFNKLTYLGCMKVSSPRNEVEALRAMATMKSSSQYPFPVTLYVPNVPEGSVRIIDQSSNVEIASFPIYKVLFCARGHDGTTESNCFAFTESSHGSEEFQIHVFSCEIKEAVSRILYSFCTAFKRSSRQVSDVKDSVIPTPDSDVFTFSVSLEVKEDDGKGNFSPVPKDRDKFYFKLKQGIEKKVVITVQQLSNKELAIERCFGMLLSPGRNVKNSDMHLLDMESMGKSYDGRAYVITGMWNPNAPIFLALNEETPKDKRVYMTVAVDMVVTEVVEPVRFLLETVVRVYPANERFWYFSRKTFTETFFMRLKQSQGKGHTNAGDAIYEVVSLQRESDKEEPVTPTSGGGPMSPQDDEAEEESDNELSSGTGDVSKDCPEKILYSWGELLGKWHSNLGARPKGLSTLVKSGVPEALRAEVWQLLAGCHDNQAMLDRYRILITKDSAQESVITRDIHRTFPAHDYFKDTGGDGQESLYKICKAYSVYDEDIGYCQGQSFLAAVLLLHMPEEQAFCVLVKIMYDYGLRDLYKNNFEDLHCKFYQLERLMQEQLPDLHSHFSDLNLEAHMYASQWFLTLFTAKFPLCMVFHIIDLLLCEGLNIIFHVALALLKTSKEDLLQADFEGALKFFRVQLPKRYRAEENARRLMEQACNIKVPIKKLKKYEKEYQTMRESQLQQEDPMDRYKFVYL</sequence>
<protein>
    <recommendedName>
        <fullName>Rab GTPase-activating protein 1-like</fullName>
    </recommendedName>
</protein>
<gene>
    <name evidence="3" type="primary">RABGAP1L</name>
</gene>
<accession>Q5RCW6</accession>
<proteinExistence type="evidence at transcript level"/>
<dbReference type="EMBL" id="CR858152">
    <property type="protein sequence ID" value="CAH90391.1"/>
    <property type="molecule type" value="mRNA"/>
</dbReference>
<dbReference type="RefSeq" id="NP_001125191.1">
    <property type="nucleotide sequence ID" value="NM_001131719.2"/>
</dbReference>
<dbReference type="SMR" id="Q5RCW6"/>
<dbReference type="FunCoup" id="Q5RCW6">
    <property type="interactions" value="3200"/>
</dbReference>
<dbReference type="STRING" id="9601.ENSPPYP00000000563"/>
<dbReference type="Ensembl" id="ENSPPYT00000000586.3">
    <property type="protein sequence ID" value="ENSPPYP00000000563.3"/>
    <property type="gene ID" value="ENSPPYG00000000487.3"/>
</dbReference>
<dbReference type="GeneID" id="100172082"/>
<dbReference type="KEGG" id="pon:100172082"/>
<dbReference type="CTD" id="9910"/>
<dbReference type="eggNOG" id="KOG1102">
    <property type="taxonomic scope" value="Eukaryota"/>
</dbReference>
<dbReference type="GeneTree" id="ENSGT00940000154611"/>
<dbReference type="InParanoid" id="Q5RCW6"/>
<dbReference type="OMA" id="XSDNELS"/>
<dbReference type="OrthoDB" id="295078at2759"/>
<dbReference type="Proteomes" id="UP000001595">
    <property type="component" value="Chromosome 1"/>
</dbReference>
<dbReference type="GO" id="GO:0005769">
    <property type="term" value="C:early endosome"/>
    <property type="evidence" value="ECO:0007669"/>
    <property type="project" value="UniProtKB-SubCell"/>
</dbReference>
<dbReference type="GO" id="GO:0005794">
    <property type="term" value="C:Golgi apparatus"/>
    <property type="evidence" value="ECO:0007669"/>
    <property type="project" value="UniProtKB-SubCell"/>
</dbReference>
<dbReference type="GO" id="GO:0005096">
    <property type="term" value="F:GTPase activator activity"/>
    <property type="evidence" value="ECO:0007669"/>
    <property type="project" value="UniProtKB-KW"/>
</dbReference>
<dbReference type="GO" id="GO:0031267">
    <property type="term" value="F:small GTPase binding"/>
    <property type="evidence" value="ECO:0007669"/>
    <property type="project" value="TreeGrafter"/>
</dbReference>
<dbReference type="GO" id="GO:0006897">
    <property type="term" value="P:endocytosis"/>
    <property type="evidence" value="ECO:0007669"/>
    <property type="project" value="UniProtKB-KW"/>
</dbReference>
<dbReference type="GO" id="GO:0015031">
    <property type="term" value="P:protein transport"/>
    <property type="evidence" value="ECO:0007669"/>
    <property type="project" value="UniProtKB-KW"/>
</dbReference>
<dbReference type="CDD" id="cd01211">
    <property type="entry name" value="PTB_Rab6GAP"/>
    <property type="match status" value="1"/>
</dbReference>
<dbReference type="FunFam" id="1.10.10.750:FF:000004">
    <property type="entry name" value="Putative rab gtpase-activating protein 1"/>
    <property type="match status" value="1"/>
</dbReference>
<dbReference type="FunFam" id="1.10.472.80:FF:000007">
    <property type="entry name" value="Rab GTPase-activating protein 1 isoform X1"/>
    <property type="match status" value="1"/>
</dbReference>
<dbReference type="FunFam" id="2.30.29.30:FF:000202">
    <property type="entry name" value="rab GTPase-activating protein 1-like isoform X1"/>
    <property type="match status" value="1"/>
</dbReference>
<dbReference type="FunFam" id="1.10.8.270:FF:000001">
    <property type="entry name" value="TBC1 domain family member 1"/>
    <property type="match status" value="1"/>
</dbReference>
<dbReference type="Gene3D" id="2.30.29.30">
    <property type="entry name" value="Pleckstrin-homology domain (PH domain)/Phosphotyrosine-binding domain (PTB)"/>
    <property type="match status" value="1"/>
</dbReference>
<dbReference type="Gene3D" id="1.10.8.270">
    <property type="entry name" value="putative rabgap domain of human tbc1 domain family member 14 like domains"/>
    <property type="match status" value="1"/>
</dbReference>
<dbReference type="Gene3D" id="1.10.10.750">
    <property type="entry name" value="Ypt/Rab-GAP domain of gyp1p, domain 1"/>
    <property type="match status" value="1"/>
</dbReference>
<dbReference type="Gene3D" id="1.10.472.80">
    <property type="entry name" value="Ypt/Rab-GAP domain of gyp1p, domain 3"/>
    <property type="match status" value="1"/>
</dbReference>
<dbReference type="InterPro" id="IPR022164">
    <property type="entry name" value="Kinesin-like"/>
</dbReference>
<dbReference type="InterPro" id="IPR011993">
    <property type="entry name" value="PH-like_dom_sf"/>
</dbReference>
<dbReference type="InterPro" id="IPR006020">
    <property type="entry name" value="PTB/PI_dom"/>
</dbReference>
<dbReference type="InterPro" id="IPR000195">
    <property type="entry name" value="Rab-GAP-TBC_dom"/>
</dbReference>
<dbReference type="InterPro" id="IPR035969">
    <property type="entry name" value="Rab-GAP_TBC_sf"/>
</dbReference>
<dbReference type="InterPro" id="IPR050302">
    <property type="entry name" value="Rab_GAP_TBC_domain"/>
</dbReference>
<dbReference type="PANTHER" id="PTHR47219">
    <property type="entry name" value="RAB GTPASE-ACTIVATING PROTEIN 1-LIKE"/>
    <property type="match status" value="1"/>
</dbReference>
<dbReference type="PANTHER" id="PTHR47219:SF7">
    <property type="entry name" value="RAB GTPASE-ACTIVATING PROTEIN 1-LIKE"/>
    <property type="match status" value="1"/>
</dbReference>
<dbReference type="Pfam" id="PF12473">
    <property type="entry name" value="DUF3694"/>
    <property type="match status" value="1"/>
</dbReference>
<dbReference type="Pfam" id="PF00640">
    <property type="entry name" value="PID"/>
    <property type="match status" value="1"/>
</dbReference>
<dbReference type="Pfam" id="PF00566">
    <property type="entry name" value="RabGAP-TBC"/>
    <property type="match status" value="1"/>
</dbReference>
<dbReference type="SMART" id="SM00462">
    <property type="entry name" value="PTB"/>
    <property type="match status" value="1"/>
</dbReference>
<dbReference type="SMART" id="SM00164">
    <property type="entry name" value="TBC"/>
    <property type="match status" value="1"/>
</dbReference>
<dbReference type="SUPFAM" id="SSF50729">
    <property type="entry name" value="PH domain-like"/>
    <property type="match status" value="1"/>
</dbReference>
<dbReference type="SUPFAM" id="SSF47923">
    <property type="entry name" value="Ypt/Rab-GAP domain of gyp1p"/>
    <property type="match status" value="2"/>
</dbReference>
<dbReference type="PROSITE" id="PS01179">
    <property type="entry name" value="PID"/>
    <property type="match status" value="1"/>
</dbReference>
<dbReference type="PROSITE" id="PS50086">
    <property type="entry name" value="TBC_RABGAP"/>
    <property type="match status" value="1"/>
</dbReference>
<feature type="chain" id="PRO_0000348056" description="Rab GTPase-activating protein 1-like">
    <location>
        <begin position="1"/>
        <end position="815"/>
    </location>
</feature>
<feature type="domain" description="PID" evidence="4">
    <location>
        <begin position="126"/>
        <end position="282"/>
    </location>
</feature>
<feature type="domain" description="Rab-GAP TBC" evidence="5">
    <location>
        <begin position="538"/>
        <end position="724"/>
    </location>
</feature>
<feature type="region of interest" description="Disordered" evidence="6">
    <location>
        <begin position="1"/>
        <end position="51"/>
    </location>
</feature>
<feature type="region of interest" description="Disordered" evidence="6">
    <location>
        <begin position="461"/>
        <end position="503"/>
    </location>
</feature>
<feature type="compositionally biased region" description="Polar residues" evidence="6">
    <location>
        <begin position="8"/>
        <end position="22"/>
    </location>
</feature>
<feature type="compositionally biased region" description="Basic and acidic residues" evidence="6">
    <location>
        <begin position="35"/>
        <end position="44"/>
    </location>
</feature>
<feature type="compositionally biased region" description="Acidic residues" evidence="6">
    <location>
        <begin position="482"/>
        <end position="492"/>
    </location>
</feature>
<feature type="site" description="Arginine finger" evidence="1">
    <location>
        <position position="580"/>
    </location>
</feature>
<feature type="site" description="Glutamine finger" evidence="1">
    <location>
        <position position="621"/>
    </location>
</feature>
<feature type="modified residue" description="Phosphothreonine" evidence="3">
    <location>
        <position position="471"/>
    </location>
</feature>
<feature type="modified residue" description="Phosphoserine" evidence="3">
    <location>
        <position position="480"/>
    </location>
</feature>
<feature type="modified residue" description="Phosphoserine" evidence="3">
    <location>
        <position position="490"/>
    </location>
</feature>
<keyword id="KW-0254">Endocytosis</keyword>
<keyword id="KW-0967">Endosome</keyword>
<keyword id="KW-0333">Golgi apparatus</keyword>
<keyword id="KW-0343">GTPase activation</keyword>
<keyword id="KW-0597">Phosphoprotein</keyword>
<keyword id="KW-0653">Protein transport</keyword>
<keyword id="KW-1185">Reference proteome</keyword>
<keyword id="KW-0813">Transport</keyword>
<comment type="function">
    <text evidence="2 3">GTP-hydrolysis activating protein (GAP) for small GTPase RAB22A, converting active RAB22A-GTP to the inactive form RAB22A-GDP (By similarity). Plays a role in endocytosis and intracellular protein transport. Recruited by ANK2 to phosphatidylinositol 3-phosphate (PI3P)-positive early endosomes, where it inactivates RAB22A, and promotes polarized trafficking to the leading edge of the migrating cells. Part of the ANK2/RABGAP1L complex which is required for the polarized recycling of fibronectin receptor ITGA5 ITGB1 to the plasma membrane that enables continuous directional cell migration (By similarity).</text>
</comment>
<comment type="subunit">
    <text evidence="3">Interacts (via Rab-GAP TBC domain) with ANK2 (via death domain).</text>
</comment>
<comment type="subcellular location">
    <subcellularLocation>
        <location evidence="3">Early endosome</location>
    </subcellularLocation>
    <subcellularLocation>
        <location evidence="3">Golgi apparatus</location>
    </subcellularLocation>
    <text evidence="2 3">Colocalizes on endosomes partially with EEA1 (By similarity). Colocalizes and cotransports on motile vesicles with ANK2 (By similarity).</text>
</comment>
<comment type="domain">
    <text evidence="1">The arginine and glutamine fingers are critical for the GTPase-activating mechanism, they pull out Rab's 'switch 2' glutamine and insert in Rab's active site.</text>
</comment>
<evidence type="ECO:0000250" key="1"/>
<evidence type="ECO:0000250" key="2">
    <source>
        <dbReference type="UniProtKB" id="A6H6A9"/>
    </source>
</evidence>
<evidence type="ECO:0000250" key="3">
    <source>
        <dbReference type="UniProtKB" id="Q5R372"/>
    </source>
</evidence>
<evidence type="ECO:0000255" key="4">
    <source>
        <dbReference type="PROSITE-ProRule" id="PRU00148"/>
    </source>
</evidence>
<evidence type="ECO:0000255" key="5">
    <source>
        <dbReference type="PROSITE-ProRule" id="PRU00163"/>
    </source>
</evidence>
<evidence type="ECO:0000256" key="6">
    <source>
        <dbReference type="SAM" id="MobiDB-lite"/>
    </source>
</evidence>
<evidence type="ECO:0000312" key="7">
    <source>
        <dbReference type="EMBL" id="CAH90391.1"/>
    </source>
</evidence>